<gene>
    <name evidence="1" type="primary">dxr</name>
    <name type="ordered locus">Cbei_1195</name>
</gene>
<organism>
    <name type="scientific">Clostridium beijerinckii (strain ATCC 51743 / NCIMB 8052)</name>
    <name type="common">Clostridium acetobutylicum</name>
    <dbReference type="NCBI Taxonomy" id="290402"/>
    <lineage>
        <taxon>Bacteria</taxon>
        <taxon>Bacillati</taxon>
        <taxon>Bacillota</taxon>
        <taxon>Clostridia</taxon>
        <taxon>Eubacteriales</taxon>
        <taxon>Clostridiaceae</taxon>
        <taxon>Clostridium</taxon>
    </lineage>
</organism>
<dbReference type="EC" id="1.1.1.267" evidence="1"/>
<dbReference type="EMBL" id="CP000721">
    <property type="protein sequence ID" value="ABR33377.1"/>
    <property type="molecule type" value="Genomic_DNA"/>
</dbReference>
<dbReference type="RefSeq" id="WP_011968532.1">
    <property type="nucleotide sequence ID" value="NC_009617.1"/>
</dbReference>
<dbReference type="SMR" id="A6LSP7"/>
<dbReference type="KEGG" id="cbe:Cbei_1195"/>
<dbReference type="eggNOG" id="COG0743">
    <property type="taxonomic scope" value="Bacteria"/>
</dbReference>
<dbReference type="HOGENOM" id="CLU_035714_4_0_9"/>
<dbReference type="UniPathway" id="UPA00056">
    <property type="reaction ID" value="UER00092"/>
</dbReference>
<dbReference type="Proteomes" id="UP000000565">
    <property type="component" value="Chromosome"/>
</dbReference>
<dbReference type="GO" id="GO:0030604">
    <property type="term" value="F:1-deoxy-D-xylulose-5-phosphate reductoisomerase activity"/>
    <property type="evidence" value="ECO:0007669"/>
    <property type="project" value="UniProtKB-UniRule"/>
</dbReference>
<dbReference type="GO" id="GO:0030145">
    <property type="term" value="F:manganese ion binding"/>
    <property type="evidence" value="ECO:0007669"/>
    <property type="project" value="TreeGrafter"/>
</dbReference>
<dbReference type="GO" id="GO:0070402">
    <property type="term" value="F:NADPH binding"/>
    <property type="evidence" value="ECO:0007669"/>
    <property type="project" value="InterPro"/>
</dbReference>
<dbReference type="GO" id="GO:0051484">
    <property type="term" value="P:isopentenyl diphosphate biosynthetic process, methylerythritol 4-phosphate pathway involved in terpenoid biosynthetic process"/>
    <property type="evidence" value="ECO:0007669"/>
    <property type="project" value="TreeGrafter"/>
</dbReference>
<dbReference type="FunFam" id="3.40.50.720:FF:000045">
    <property type="entry name" value="1-deoxy-D-xylulose 5-phosphate reductoisomerase"/>
    <property type="match status" value="1"/>
</dbReference>
<dbReference type="Gene3D" id="1.10.1740.10">
    <property type="match status" value="1"/>
</dbReference>
<dbReference type="Gene3D" id="3.40.50.720">
    <property type="entry name" value="NAD(P)-binding Rossmann-like Domain"/>
    <property type="match status" value="1"/>
</dbReference>
<dbReference type="HAMAP" id="MF_00183">
    <property type="entry name" value="DXP_reductoisom"/>
    <property type="match status" value="1"/>
</dbReference>
<dbReference type="InterPro" id="IPR003821">
    <property type="entry name" value="DXP_reductoisomerase"/>
</dbReference>
<dbReference type="InterPro" id="IPR013644">
    <property type="entry name" value="DXP_reductoisomerase_C"/>
</dbReference>
<dbReference type="InterPro" id="IPR013512">
    <property type="entry name" value="DXP_reductoisomerase_N"/>
</dbReference>
<dbReference type="InterPro" id="IPR026877">
    <property type="entry name" value="DXPR_C"/>
</dbReference>
<dbReference type="InterPro" id="IPR036169">
    <property type="entry name" value="DXPR_C_sf"/>
</dbReference>
<dbReference type="InterPro" id="IPR036291">
    <property type="entry name" value="NAD(P)-bd_dom_sf"/>
</dbReference>
<dbReference type="NCBIfam" id="TIGR00243">
    <property type="entry name" value="Dxr"/>
    <property type="match status" value="1"/>
</dbReference>
<dbReference type="NCBIfam" id="NF009114">
    <property type="entry name" value="PRK12464.1"/>
    <property type="match status" value="1"/>
</dbReference>
<dbReference type="PANTHER" id="PTHR30525">
    <property type="entry name" value="1-DEOXY-D-XYLULOSE 5-PHOSPHATE REDUCTOISOMERASE"/>
    <property type="match status" value="1"/>
</dbReference>
<dbReference type="PANTHER" id="PTHR30525:SF0">
    <property type="entry name" value="1-DEOXY-D-XYLULOSE 5-PHOSPHATE REDUCTOISOMERASE, CHLOROPLASTIC"/>
    <property type="match status" value="1"/>
</dbReference>
<dbReference type="Pfam" id="PF08436">
    <property type="entry name" value="DXP_redisom_C"/>
    <property type="match status" value="1"/>
</dbReference>
<dbReference type="Pfam" id="PF02670">
    <property type="entry name" value="DXP_reductoisom"/>
    <property type="match status" value="1"/>
</dbReference>
<dbReference type="Pfam" id="PF13288">
    <property type="entry name" value="DXPR_C"/>
    <property type="match status" value="1"/>
</dbReference>
<dbReference type="PIRSF" id="PIRSF006205">
    <property type="entry name" value="Dxp_reductismrs"/>
    <property type="match status" value="1"/>
</dbReference>
<dbReference type="SUPFAM" id="SSF69055">
    <property type="entry name" value="1-deoxy-D-xylulose-5-phosphate reductoisomerase, C-terminal domain"/>
    <property type="match status" value="1"/>
</dbReference>
<dbReference type="SUPFAM" id="SSF55347">
    <property type="entry name" value="Glyceraldehyde-3-phosphate dehydrogenase-like, C-terminal domain"/>
    <property type="match status" value="1"/>
</dbReference>
<dbReference type="SUPFAM" id="SSF51735">
    <property type="entry name" value="NAD(P)-binding Rossmann-fold domains"/>
    <property type="match status" value="1"/>
</dbReference>
<name>DXR_CLOB8</name>
<keyword id="KW-0414">Isoprene biosynthesis</keyword>
<keyword id="KW-0464">Manganese</keyword>
<keyword id="KW-0479">Metal-binding</keyword>
<keyword id="KW-0521">NADP</keyword>
<keyword id="KW-0560">Oxidoreductase</keyword>
<comment type="function">
    <text evidence="1">Catalyzes the NADPH-dependent rearrangement and reduction of 1-deoxy-D-xylulose-5-phosphate (DXP) to 2-C-methyl-D-erythritol 4-phosphate (MEP).</text>
</comment>
<comment type="catalytic activity">
    <reaction evidence="1">
        <text>2-C-methyl-D-erythritol 4-phosphate + NADP(+) = 1-deoxy-D-xylulose 5-phosphate + NADPH + H(+)</text>
        <dbReference type="Rhea" id="RHEA:13717"/>
        <dbReference type="ChEBI" id="CHEBI:15378"/>
        <dbReference type="ChEBI" id="CHEBI:57783"/>
        <dbReference type="ChEBI" id="CHEBI:57792"/>
        <dbReference type="ChEBI" id="CHEBI:58262"/>
        <dbReference type="ChEBI" id="CHEBI:58349"/>
        <dbReference type="EC" id="1.1.1.267"/>
    </reaction>
    <physiologicalReaction direction="right-to-left" evidence="1">
        <dbReference type="Rhea" id="RHEA:13719"/>
    </physiologicalReaction>
</comment>
<comment type="cofactor">
    <cofactor evidence="1">
        <name>Mg(2+)</name>
        <dbReference type="ChEBI" id="CHEBI:18420"/>
    </cofactor>
    <cofactor evidence="1">
        <name>Mn(2+)</name>
        <dbReference type="ChEBI" id="CHEBI:29035"/>
    </cofactor>
</comment>
<comment type="pathway">
    <text evidence="1">Isoprenoid biosynthesis; isopentenyl diphosphate biosynthesis via DXP pathway; isopentenyl diphosphate from 1-deoxy-D-xylulose 5-phosphate: step 1/6.</text>
</comment>
<comment type="similarity">
    <text evidence="1">Belongs to the DXR family.</text>
</comment>
<proteinExistence type="inferred from homology"/>
<protein>
    <recommendedName>
        <fullName evidence="1">1-deoxy-D-xylulose 5-phosphate reductoisomerase</fullName>
        <shortName evidence="1">DXP reductoisomerase</shortName>
        <ecNumber evidence="1">1.1.1.267</ecNumber>
    </recommendedName>
    <alternativeName>
        <fullName evidence="1">1-deoxyxylulose-5-phosphate reductoisomerase</fullName>
    </alternativeName>
    <alternativeName>
        <fullName evidence="1">2-C-methyl-D-erythritol 4-phosphate synthase</fullName>
    </alternativeName>
</protein>
<evidence type="ECO:0000255" key="1">
    <source>
        <dbReference type="HAMAP-Rule" id="MF_00183"/>
    </source>
</evidence>
<feature type="chain" id="PRO_1000077332" description="1-deoxy-D-xylulose 5-phosphate reductoisomerase">
    <location>
        <begin position="1"/>
        <end position="387"/>
    </location>
</feature>
<feature type="binding site" evidence="1">
    <location>
        <position position="10"/>
    </location>
    <ligand>
        <name>NADPH</name>
        <dbReference type="ChEBI" id="CHEBI:57783"/>
    </ligand>
</feature>
<feature type="binding site" evidence="1">
    <location>
        <position position="11"/>
    </location>
    <ligand>
        <name>NADPH</name>
        <dbReference type="ChEBI" id="CHEBI:57783"/>
    </ligand>
</feature>
<feature type="binding site" evidence="1">
    <location>
        <position position="12"/>
    </location>
    <ligand>
        <name>NADPH</name>
        <dbReference type="ChEBI" id="CHEBI:57783"/>
    </ligand>
</feature>
<feature type="binding site" evidence="1">
    <location>
        <position position="13"/>
    </location>
    <ligand>
        <name>NADPH</name>
        <dbReference type="ChEBI" id="CHEBI:57783"/>
    </ligand>
</feature>
<feature type="binding site" evidence="1">
    <location>
        <position position="124"/>
    </location>
    <ligand>
        <name>NADPH</name>
        <dbReference type="ChEBI" id="CHEBI:57783"/>
    </ligand>
</feature>
<feature type="binding site" evidence="1">
    <location>
        <position position="125"/>
    </location>
    <ligand>
        <name>1-deoxy-D-xylulose 5-phosphate</name>
        <dbReference type="ChEBI" id="CHEBI:57792"/>
    </ligand>
</feature>
<feature type="binding site" evidence="1">
    <location>
        <position position="126"/>
    </location>
    <ligand>
        <name>NADPH</name>
        <dbReference type="ChEBI" id="CHEBI:57783"/>
    </ligand>
</feature>
<feature type="binding site" evidence="1">
    <location>
        <position position="150"/>
    </location>
    <ligand>
        <name>Mn(2+)</name>
        <dbReference type="ChEBI" id="CHEBI:29035"/>
    </ligand>
</feature>
<feature type="binding site" evidence="1">
    <location>
        <position position="151"/>
    </location>
    <ligand>
        <name>1-deoxy-D-xylulose 5-phosphate</name>
        <dbReference type="ChEBI" id="CHEBI:57792"/>
    </ligand>
</feature>
<feature type="binding site" evidence="1">
    <location>
        <position position="152"/>
    </location>
    <ligand>
        <name>1-deoxy-D-xylulose 5-phosphate</name>
        <dbReference type="ChEBI" id="CHEBI:57792"/>
    </ligand>
</feature>
<feature type="binding site" evidence="1">
    <location>
        <position position="152"/>
    </location>
    <ligand>
        <name>Mn(2+)</name>
        <dbReference type="ChEBI" id="CHEBI:29035"/>
    </ligand>
</feature>
<feature type="binding site" evidence="1">
    <location>
        <position position="176"/>
    </location>
    <ligand>
        <name>1-deoxy-D-xylulose 5-phosphate</name>
        <dbReference type="ChEBI" id="CHEBI:57792"/>
    </ligand>
</feature>
<feature type="binding site" evidence="1">
    <location>
        <position position="199"/>
    </location>
    <ligand>
        <name>1-deoxy-D-xylulose 5-phosphate</name>
        <dbReference type="ChEBI" id="CHEBI:57792"/>
    </ligand>
</feature>
<feature type="binding site" evidence="1">
    <location>
        <position position="205"/>
    </location>
    <ligand>
        <name>NADPH</name>
        <dbReference type="ChEBI" id="CHEBI:57783"/>
    </ligand>
</feature>
<feature type="binding site" evidence="1">
    <location>
        <position position="212"/>
    </location>
    <ligand>
        <name>1-deoxy-D-xylulose 5-phosphate</name>
        <dbReference type="ChEBI" id="CHEBI:57792"/>
    </ligand>
</feature>
<feature type="binding site" evidence="1">
    <location>
        <position position="217"/>
    </location>
    <ligand>
        <name>1-deoxy-D-xylulose 5-phosphate</name>
        <dbReference type="ChEBI" id="CHEBI:57792"/>
    </ligand>
</feature>
<feature type="binding site" evidence="1">
    <location>
        <position position="218"/>
    </location>
    <ligand>
        <name>1-deoxy-D-xylulose 5-phosphate</name>
        <dbReference type="ChEBI" id="CHEBI:57792"/>
    </ligand>
</feature>
<feature type="binding site" evidence="1">
    <location>
        <position position="221"/>
    </location>
    <ligand>
        <name>1-deoxy-D-xylulose 5-phosphate</name>
        <dbReference type="ChEBI" id="CHEBI:57792"/>
    </ligand>
</feature>
<feature type="binding site" evidence="1">
    <location>
        <position position="221"/>
    </location>
    <ligand>
        <name>Mn(2+)</name>
        <dbReference type="ChEBI" id="CHEBI:29035"/>
    </ligand>
</feature>
<sequence>MKNISILGATGSIGSQTLDVIRKSNGELKLIGVTANTSVKKVIEIIEEFKPSYVGMMDAVSTHEIKKYCEEHNKKIKVLEGIEGLDKIASLDEIDMVVTSVVGMIGLEPTMKAIEAKKDIALANKETLVVAGEIVMKAAKENNVKIFPVDSEHSAIFQCLRGNDINTLRKIILTASGGPFRGRTLESLEDIKVEDALKHPKWNMGRKISIDSATLMNKGLEVIEAHWLFNCDYDNIQVVVHPQSIVHSMVEYNDGSIVAQLGAQDMRLPIQYALLYENREKRIADTIDFYEISQLTFEKPDIDTFKALNLAFKAGKAGRLMPTILNGANEAAVELFLDRKIKFLQIADIIERCMEVFKTQANKELTLENIIELDKEVKEYVIKNAVL</sequence>
<reference key="1">
    <citation type="submission" date="2007-06" db="EMBL/GenBank/DDBJ databases">
        <title>Complete sequence of Clostridium beijerinckii NCIMB 8052.</title>
        <authorList>
            <consortium name="US DOE Joint Genome Institute"/>
            <person name="Copeland A."/>
            <person name="Lucas S."/>
            <person name="Lapidus A."/>
            <person name="Barry K."/>
            <person name="Detter J.C."/>
            <person name="Glavina del Rio T."/>
            <person name="Hammon N."/>
            <person name="Israni S."/>
            <person name="Dalin E."/>
            <person name="Tice H."/>
            <person name="Pitluck S."/>
            <person name="Sims D."/>
            <person name="Brettin T."/>
            <person name="Bruce D."/>
            <person name="Tapia R."/>
            <person name="Brainard J."/>
            <person name="Schmutz J."/>
            <person name="Larimer F."/>
            <person name="Land M."/>
            <person name="Hauser L."/>
            <person name="Kyrpides N."/>
            <person name="Mikhailova N."/>
            <person name="Bennet G."/>
            <person name="Cann I."/>
            <person name="Chen J.-S."/>
            <person name="Contreras A.L."/>
            <person name="Jones D."/>
            <person name="Kashket E."/>
            <person name="Mitchell W."/>
            <person name="Stoddard S."/>
            <person name="Schwarz W."/>
            <person name="Qureshi N."/>
            <person name="Young M."/>
            <person name="Shi Z."/>
            <person name="Ezeji T."/>
            <person name="White B."/>
            <person name="Blaschek H."/>
            <person name="Richardson P."/>
        </authorList>
    </citation>
    <scope>NUCLEOTIDE SEQUENCE [LARGE SCALE GENOMIC DNA]</scope>
    <source>
        <strain>ATCC 51743 / NCIMB 8052</strain>
    </source>
</reference>
<accession>A6LSP7</accession>